<organism>
    <name type="scientific">Doritaenopsis sp.</name>
    <name type="common">Moth orchid</name>
    <dbReference type="NCBI Taxonomy" id="4749"/>
    <lineage>
        <taxon>Eukaryota</taxon>
        <taxon>Viridiplantae</taxon>
        <taxon>Streptophyta</taxon>
        <taxon>Embryophyta</taxon>
        <taxon>Tracheophyta</taxon>
        <taxon>Spermatophyta</taxon>
        <taxon>Magnoliopsida</taxon>
        <taxon>Liliopsida</taxon>
        <taxon>Asparagales</taxon>
        <taxon>Orchidaceae</taxon>
        <taxon>Epidendroideae</taxon>
        <taxon>Vandeae</taxon>
        <taxon>Aeridinae</taxon>
        <taxon>x Doritaenopsis</taxon>
    </lineage>
</organism>
<dbReference type="EC" id="1.14.17.4"/>
<dbReference type="EMBL" id="L07912">
    <property type="protein sequence ID" value="AAA21611.1"/>
    <property type="status" value="ALT_INIT"/>
    <property type="molecule type" value="mRNA"/>
</dbReference>
<dbReference type="PIR" id="JQ2274">
    <property type="entry name" value="JQ2274"/>
</dbReference>
<dbReference type="SMR" id="P31238"/>
<dbReference type="UniPathway" id="UPA00384">
    <property type="reaction ID" value="UER00563"/>
</dbReference>
<dbReference type="GO" id="GO:0009815">
    <property type="term" value="F:1-aminocyclopropane-1-carboxylate oxidase activity"/>
    <property type="evidence" value="ECO:0007669"/>
    <property type="project" value="UniProtKB-EC"/>
</dbReference>
<dbReference type="GO" id="GO:0031418">
    <property type="term" value="F:L-ascorbic acid binding"/>
    <property type="evidence" value="ECO:0007669"/>
    <property type="project" value="UniProtKB-KW"/>
</dbReference>
<dbReference type="GO" id="GO:0046872">
    <property type="term" value="F:metal ion binding"/>
    <property type="evidence" value="ECO:0007669"/>
    <property type="project" value="UniProtKB-KW"/>
</dbReference>
<dbReference type="GO" id="GO:0009693">
    <property type="term" value="P:ethylene biosynthetic process"/>
    <property type="evidence" value="ECO:0007669"/>
    <property type="project" value="UniProtKB-UniPathway"/>
</dbReference>
<dbReference type="GO" id="GO:0009835">
    <property type="term" value="P:fruit ripening"/>
    <property type="evidence" value="ECO:0007669"/>
    <property type="project" value="UniProtKB-KW"/>
</dbReference>
<dbReference type="FunFam" id="2.60.120.330:FF:000002">
    <property type="entry name" value="1-aminocyclopropane-1-carboxylate oxidase 1"/>
    <property type="match status" value="1"/>
</dbReference>
<dbReference type="Gene3D" id="2.60.120.330">
    <property type="entry name" value="B-lactam Antibiotic, Isopenicillin N Synthase, Chain"/>
    <property type="match status" value="1"/>
</dbReference>
<dbReference type="InterPro" id="IPR026992">
    <property type="entry name" value="DIOX_N"/>
</dbReference>
<dbReference type="InterPro" id="IPR044861">
    <property type="entry name" value="IPNS-like_FE2OG_OXY"/>
</dbReference>
<dbReference type="InterPro" id="IPR027443">
    <property type="entry name" value="IPNS-like_sf"/>
</dbReference>
<dbReference type="InterPro" id="IPR005123">
    <property type="entry name" value="Oxoglu/Fe-dep_dioxygenase_dom"/>
</dbReference>
<dbReference type="InterPro" id="IPR050295">
    <property type="entry name" value="Plant_2OG-oxidoreductases"/>
</dbReference>
<dbReference type="PANTHER" id="PTHR47991">
    <property type="entry name" value="OXOGLUTARATE/IRON-DEPENDENT DIOXYGENASE"/>
    <property type="match status" value="1"/>
</dbReference>
<dbReference type="Pfam" id="PF03171">
    <property type="entry name" value="2OG-FeII_Oxy"/>
    <property type="match status" value="1"/>
</dbReference>
<dbReference type="Pfam" id="PF14226">
    <property type="entry name" value="DIOX_N"/>
    <property type="match status" value="1"/>
</dbReference>
<dbReference type="SUPFAM" id="SSF51197">
    <property type="entry name" value="Clavaminate synthase-like"/>
    <property type="match status" value="1"/>
</dbReference>
<dbReference type="PROSITE" id="PS51471">
    <property type="entry name" value="FE2OG_OXY"/>
    <property type="match status" value="1"/>
</dbReference>
<gene>
    <name type="primary">ACO1</name>
    <name type="synonym">ACO</name>
</gene>
<comment type="catalytic activity">
    <reaction>
        <text>1-aminocyclopropane-1-carboxylate + L-ascorbate + O2 = ethene + L-dehydroascorbate + hydrogen cyanide + CO2 + 2 H2O</text>
        <dbReference type="Rhea" id="RHEA:23640"/>
        <dbReference type="ChEBI" id="CHEBI:15377"/>
        <dbReference type="ChEBI" id="CHEBI:15379"/>
        <dbReference type="ChEBI" id="CHEBI:16526"/>
        <dbReference type="ChEBI" id="CHEBI:18153"/>
        <dbReference type="ChEBI" id="CHEBI:18407"/>
        <dbReference type="ChEBI" id="CHEBI:38290"/>
        <dbReference type="ChEBI" id="CHEBI:58360"/>
        <dbReference type="ChEBI" id="CHEBI:58539"/>
        <dbReference type="EC" id="1.14.17.4"/>
    </reaction>
</comment>
<comment type="cofactor">
    <cofactor>
        <name>Fe cation</name>
        <dbReference type="ChEBI" id="CHEBI:24875"/>
    </cofactor>
</comment>
<comment type="pathway">
    <text>Alkene biosynthesis; ethylene biosynthesis via S-adenosyl-L-methionine; ethylene from S-adenosyl-L-methionine: step 2/2.</text>
</comment>
<comment type="induction">
    <text>By pollination.</text>
</comment>
<comment type="similarity">
    <text evidence="2">Belongs to the iron/ascorbate-dependent oxidoreductase family.</text>
</comment>
<comment type="sequence caution" evidence="2">
    <conflict type="erroneous initiation">
        <sequence resource="EMBL-CDS" id="AAA21611"/>
    </conflict>
</comment>
<evidence type="ECO:0000255" key="1">
    <source>
        <dbReference type="PROSITE-ProRule" id="PRU00805"/>
    </source>
</evidence>
<evidence type="ECO:0000305" key="2"/>
<feature type="chain" id="PRO_0000067259" description="1-aminocyclopropane-1-carboxylate oxidase 1">
    <location>
        <begin position="1"/>
        <end position="327"/>
    </location>
</feature>
<feature type="domain" description="Fe2OG dioxygenase" evidence="1">
    <location>
        <begin position="157"/>
        <end position="257"/>
    </location>
</feature>
<feature type="binding site" evidence="1">
    <location>
        <position position="181"/>
    </location>
    <ligand>
        <name>Fe cation</name>
        <dbReference type="ChEBI" id="CHEBI:24875"/>
    </ligand>
</feature>
<feature type="binding site" evidence="1">
    <location>
        <position position="183"/>
    </location>
    <ligand>
        <name>Fe cation</name>
        <dbReference type="ChEBI" id="CHEBI:24875"/>
    </ligand>
</feature>
<feature type="binding site" evidence="1">
    <location>
        <position position="238"/>
    </location>
    <ligand>
        <name>Fe cation</name>
        <dbReference type="ChEBI" id="CHEBI:24875"/>
    </ligand>
</feature>
<sequence length="327" mass="37234">MESGSFPVINMELLQGSQRPAAMALLRDACENWGLYELLNHGISHELMNRVETVNKEHYRRFREQRFKEFASKTLDTVENVEPENLDWESTFFLRHLPTSNISQIPDLDDDCRSTMKEFALELENLAERLLDLLCEDLGLEKGYLKKVFCGGSDGLPTFGTKVSNYPPCPKPELIKGLRAHTDAGGIILLFQDDKVSGLQLLKDGEWIDVPPVRHSIVVNIGDQLEVITNGKYKSVLHRVVAQTDGNRMSIASFYNPGSDAVIFPAPALVEKEAEEKEEKKKEIYPKFVFQDYMNLYIRKKFEAKEPRFEAMKSMEIVMSSQPIPTA</sequence>
<name>ACCO1_DORSP</name>
<keyword id="KW-0266">Ethylene biosynthesis</keyword>
<keyword id="KW-0292">Fruit ripening</keyword>
<keyword id="KW-0408">Iron</keyword>
<keyword id="KW-0479">Metal-binding</keyword>
<keyword id="KW-0560">Oxidoreductase</keyword>
<keyword id="KW-0847">Vitamin C</keyword>
<accession>P31238</accession>
<reference key="1">
    <citation type="journal article" date="1993" name="Plant Physiol.">
        <title>Temporal and spatial regulation of 1-aminocyclopropane-1-carboxylate oxidase in the pollination-induced senescence of orchid flowers.</title>
        <authorList>
            <person name="Nadeau J.A."/>
            <person name="Zhang X."/>
            <person name="Nair H."/>
            <person name="O'Neill S.D."/>
        </authorList>
    </citation>
    <scope>NUCLEOTIDE SEQUENCE [MRNA]</scope>
    <source>
        <strain>cv. Hausermann's red bird 'Cardinal'</strain>
        <tissue>Gynoecium</tissue>
    </source>
</reference>
<protein>
    <recommendedName>
        <fullName>1-aminocyclopropane-1-carboxylate oxidase 1</fullName>
        <shortName>ACC oxidase 1</shortName>
        <ecNumber>1.14.17.4</ecNumber>
    </recommendedName>
    <alternativeName>
        <fullName>Ethylene-forming enzyme</fullName>
        <shortName>EFE</shortName>
    </alternativeName>
</protein>
<proteinExistence type="evidence at transcript level"/>